<accession>P25725</accession>
<accession>O16180</accession>
<accession>O16181</accession>
<accession>O16182</accession>
<accession>O16183</accession>
<accession>O16184</accession>
<accession>O16185</accession>
<accession>O16186</accession>
<name>EST5C_DROPS</name>
<sequence>MLAARLIILLSFYWLSASAIDPADPLFVDLPHGKIRGRDNGFYYSYESLPYAEPPVGELRFEAPQPYKQQWTDTFDATQPPVTCMQWNQFIFGDNKLVGVEDCLTVSIYKPKNTSQSSFPVVAHMHGGAFMFGEARQNGHENMMREGKLILVKISYRLGPLGFASTGDADLSGNFGLKDQRLALLWIKQNIASFGGEPENIIVVGHSAGGASVHLQMLREDFAQVAKAGISFGGNAMDPWVIHQSARGRTFELGRIVGCGQASDSMELKNCLKSKPAGEIVSAVHSFLVFAYVPFAPFGPVVESPDAPEAFISQHPVDIIKSGKFAQVPWAVTYNTEDGGYNAAVLLEKQASSGRELIFDLNDHWFDWAPYLLFYRDSMTTIKDMDDYSRKLRQEYLGDRRFSVESYWDLQRLFTDILYKNATELALDLYRKHGKSPVYAFVYDNPANTGIGQFFAKRTDVHFGTVHGDEYFLIFENLARGPEMRSDEEIISRNFLNMINDFVVSGNGTMTFGNCVLQDNVGSNKFQLLSITKNGCENLQLESFP</sequence>
<organism>
    <name type="scientific">Drosophila pseudoobscura pseudoobscura</name>
    <name type="common">Fruit fly</name>
    <dbReference type="NCBI Taxonomy" id="46245"/>
    <lineage>
        <taxon>Eukaryota</taxon>
        <taxon>Metazoa</taxon>
        <taxon>Ecdysozoa</taxon>
        <taxon>Arthropoda</taxon>
        <taxon>Hexapoda</taxon>
        <taxon>Insecta</taxon>
        <taxon>Pterygota</taxon>
        <taxon>Neoptera</taxon>
        <taxon>Endopterygota</taxon>
        <taxon>Diptera</taxon>
        <taxon>Brachycera</taxon>
        <taxon>Muscomorpha</taxon>
        <taxon>Ephydroidea</taxon>
        <taxon>Drosophilidae</taxon>
        <taxon>Drosophila</taxon>
        <taxon>Sophophora</taxon>
    </lineage>
</organism>
<reference key="1">
    <citation type="journal article" date="1990" name="Mol. Biol. Evol.">
        <title>Cloning of the esterase-5 locus from Drosophila pseudoobscura and comparison with its homologue in D. melanogaster.</title>
        <authorList>
            <person name="Brady J.P."/>
            <person name="Richmond R.C."/>
            <person name="Oakeshott J.G."/>
        </authorList>
    </citation>
    <scope>NUCLEOTIDE SEQUENCE [GENOMIC DNA]</scope>
</reference>
<reference key="2">
    <citation type="journal article" date="1998" name="Genetics">
        <title>The role of gene conversion in determining sequence variation and divergence in the Est-5 gene family in Drosophila pseudoobscura.</title>
        <authorList>
            <person name="King L.M."/>
        </authorList>
    </citation>
    <scope>NUCLEOTIDE SEQUENCE [GENOMIC DNA]</scope>
    <source>
        <strain>GB115E</strain>
        <strain>GB139E</strain>
        <strain>GB336E</strain>
        <strain>GB4E</strain>
        <strain>GB8E</strain>
        <strain>JR198E</strain>
        <strain>JR341E</strain>
        <strain>JR50E</strain>
    </source>
</reference>
<reference key="3">
    <citation type="journal article" date="2005" name="Genome Res.">
        <title>Comparative genome sequencing of Drosophila pseudoobscura: chromosomal, gene, and cis-element evolution.</title>
        <authorList>
            <person name="Richards S."/>
            <person name="Liu Y."/>
            <person name="Bettencourt B.R."/>
            <person name="Hradecky P."/>
            <person name="Letovsky S."/>
            <person name="Nielsen R."/>
            <person name="Thornton K."/>
            <person name="Hubisz M.J."/>
            <person name="Chen R."/>
            <person name="Meisel R.P."/>
            <person name="Couronne O."/>
            <person name="Hua S."/>
            <person name="Smith M.A."/>
            <person name="Zhang P."/>
            <person name="Liu J."/>
            <person name="Bussemaker H.J."/>
            <person name="van Batenburg M.F."/>
            <person name="Howells S.L."/>
            <person name="Scherer S.E."/>
            <person name="Sodergren E."/>
            <person name="Matthews B.B."/>
            <person name="Crosby M.A."/>
            <person name="Schroeder A.J."/>
            <person name="Ortiz-Barrientos D."/>
            <person name="Rives C.M."/>
            <person name="Metzker M.L."/>
            <person name="Muzny D.M."/>
            <person name="Scott G."/>
            <person name="Steffen D."/>
            <person name="Wheeler D.A."/>
            <person name="Worley K.C."/>
            <person name="Havlak P."/>
            <person name="Durbin K.J."/>
            <person name="Egan A."/>
            <person name="Gill R."/>
            <person name="Hume J."/>
            <person name="Morgan M.B."/>
            <person name="Miner G."/>
            <person name="Hamilton C."/>
            <person name="Huang Y."/>
            <person name="Waldron L."/>
            <person name="Verduzco D."/>
            <person name="Clerc-Blankenburg K.P."/>
            <person name="Dubchak I."/>
            <person name="Noor M.A.F."/>
            <person name="Anderson W."/>
            <person name="White K.P."/>
            <person name="Clark A.G."/>
            <person name="Schaeffer S.W."/>
            <person name="Gelbart W.M."/>
            <person name="Weinstock G.M."/>
            <person name="Gibbs R.A."/>
        </authorList>
    </citation>
    <scope>NUCLEOTIDE SEQUENCE [LARGE SCALE GENOMIC DNA]</scope>
    <source>
        <strain>MV2-25 / Tucson 14011-0121.94</strain>
    </source>
</reference>
<evidence type="ECO:0000250" key="1"/>
<evidence type="ECO:0000255" key="2"/>
<evidence type="ECO:0000255" key="3">
    <source>
        <dbReference type="PROSITE-ProRule" id="PRU10039"/>
    </source>
</evidence>
<evidence type="ECO:0000305" key="4"/>
<feature type="signal peptide" evidence="2">
    <location>
        <begin position="1"/>
        <end position="19"/>
    </location>
</feature>
<feature type="chain" id="PRO_0000008560" description="Esterase-5C">
    <location>
        <begin position="20"/>
        <end position="545"/>
    </location>
</feature>
<feature type="active site" description="Acyl-ester intermediate" evidence="3">
    <location>
        <position position="207"/>
    </location>
</feature>
<feature type="active site" description="Charge relay system" evidence="1">
    <location>
        <position position="467"/>
    </location>
</feature>
<feature type="glycosylation site" description="N-linked (GlcNAc...) asparagine" evidence="2">
    <location>
        <position position="113"/>
    </location>
</feature>
<feature type="glycosylation site" description="N-linked (GlcNAc...) asparagine" evidence="2">
    <location>
        <position position="421"/>
    </location>
</feature>
<feature type="glycosylation site" description="N-linked (GlcNAc...) asparagine" evidence="2">
    <location>
        <position position="507"/>
    </location>
</feature>
<feature type="disulfide bond" evidence="1">
    <location>
        <begin position="84"/>
        <end position="103"/>
    </location>
</feature>
<feature type="disulfide bond" evidence="1">
    <location>
        <begin position="259"/>
        <end position="271"/>
    </location>
</feature>
<feature type="disulfide bond" evidence="2">
    <location>
        <begin position="515"/>
        <end position="536"/>
    </location>
</feature>
<feature type="sequence variant" description="In strain: GB8E.">
    <original>L</original>
    <variation>R</variation>
    <location>
        <position position="6"/>
    </location>
</feature>
<feature type="sequence variant" description="In strain: GB4E.">
    <original>S</original>
    <variation>R</variation>
    <location>
        <position position="11"/>
    </location>
</feature>
<feature type="sequence variant" description="In strain: GB8E and GB336E.">
    <original>F</original>
    <variation>N</variation>
    <location>
        <position position="42"/>
    </location>
</feature>
<feature type="sequence variant" description="In strain: JR50E and GB139E.">
    <original>E</original>
    <variation>D</variation>
    <location>
        <position position="58"/>
    </location>
</feature>
<feature type="sequence variant" description="In strain: JR50E, GB8E and GB115E.">
    <original>V</original>
    <variation>A</variation>
    <location>
        <position position="98"/>
    </location>
</feature>
<feature type="sequence variant" description="In strain: JR341E.">
    <original>F</original>
    <variation>S</variation>
    <location>
        <position position="130"/>
    </location>
</feature>
<feature type="sequence variant" description="In strain: GB4E, JR50E, GB115E, GB139E, GB336E and JR341E.">
    <original>D</original>
    <variation>G</variation>
    <location>
        <position position="170"/>
    </location>
</feature>
<feature type="sequence variant" description="In strain: GB4E, JR50E, GB115E, GB139E, GB336E and JR341E.">
    <original>M</original>
    <variation>T</variation>
    <location>
        <position position="266"/>
    </location>
</feature>
<feature type="sequence variant" description="In strain: JR50E.">
    <original>A</original>
    <variation>G</variation>
    <location>
        <position position="291"/>
    </location>
</feature>
<feature type="sequence variant" description="In strain: GB115E.">
    <original>A</original>
    <variation>T</variation>
    <location>
        <position position="307"/>
    </location>
</feature>
<feature type="sequence variant" description="In strain: GB336E.">
    <original>V</original>
    <variation>I</variation>
    <location>
        <position position="461"/>
    </location>
</feature>
<feature type="sequence variant" description="In strain: JR50E and JR341E.">
    <original>E</original>
    <variation>V</variation>
    <location>
        <position position="537"/>
    </location>
</feature>
<dbReference type="EC" id="3.1.1.1"/>
<dbReference type="EMBL" id="M55907">
    <property type="protein sequence ID" value="AAA28514.1"/>
    <property type="molecule type" value="Genomic_DNA"/>
</dbReference>
<dbReference type="EMBL" id="AF016143">
    <property type="protein sequence ID" value="AAB70233.1"/>
    <property type="molecule type" value="Genomic_DNA"/>
</dbReference>
<dbReference type="EMBL" id="AF016144">
    <property type="protein sequence ID" value="AAB70234.1"/>
    <property type="molecule type" value="Genomic_DNA"/>
</dbReference>
<dbReference type="EMBL" id="AF016145">
    <property type="protein sequence ID" value="AAB70235.1"/>
    <property type="molecule type" value="Genomic_DNA"/>
</dbReference>
<dbReference type="EMBL" id="AF016146">
    <property type="protein sequence ID" value="AAB70236.1"/>
    <property type="molecule type" value="Genomic_DNA"/>
</dbReference>
<dbReference type="EMBL" id="AF016147">
    <property type="protein sequence ID" value="AAB70237.1"/>
    <property type="molecule type" value="Genomic_DNA"/>
</dbReference>
<dbReference type="EMBL" id="AF016148">
    <property type="protein sequence ID" value="AAB70238.1"/>
    <property type="molecule type" value="Genomic_DNA"/>
</dbReference>
<dbReference type="EMBL" id="AF016149">
    <property type="protein sequence ID" value="AAB70239.1"/>
    <property type="molecule type" value="Genomic_DNA"/>
</dbReference>
<dbReference type="EMBL" id="AF016150">
    <property type="protein sequence ID" value="AAB70240.1"/>
    <property type="molecule type" value="Genomic_DNA"/>
</dbReference>
<dbReference type="EMBL" id="CH379069">
    <property type="status" value="NOT_ANNOTATED_CDS"/>
    <property type="molecule type" value="Genomic_DNA"/>
</dbReference>
<dbReference type="SMR" id="P25725"/>
<dbReference type="FunCoup" id="P25725">
    <property type="interactions" value="95"/>
</dbReference>
<dbReference type="STRING" id="46245.P25725"/>
<dbReference type="ESTHER" id="drops-est5c">
    <property type="family name" value="Carb_B_Arthropoda"/>
</dbReference>
<dbReference type="MEROPS" id="S09.947"/>
<dbReference type="GlyCosmos" id="P25725">
    <property type="glycosylation" value="3 sites, No reported glycans"/>
</dbReference>
<dbReference type="eggNOG" id="KOG1516">
    <property type="taxonomic scope" value="Eukaryota"/>
</dbReference>
<dbReference type="InParanoid" id="P25725"/>
<dbReference type="Proteomes" id="UP000001819">
    <property type="component" value="Unplaced"/>
</dbReference>
<dbReference type="GO" id="GO:0005576">
    <property type="term" value="C:extracellular region"/>
    <property type="evidence" value="ECO:0007669"/>
    <property type="project" value="UniProtKB-SubCell"/>
</dbReference>
<dbReference type="GO" id="GO:0106435">
    <property type="term" value="F:carboxylesterase activity"/>
    <property type="evidence" value="ECO:0007669"/>
    <property type="project" value="UniProtKB-EC"/>
</dbReference>
<dbReference type="CDD" id="cd00312">
    <property type="entry name" value="Esterase_lipase"/>
    <property type="match status" value="1"/>
</dbReference>
<dbReference type="FunFam" id="3.40.50.1820:FF:000378">
    <property type="entry name" value="Carboxylic ester hydrolase"/>
    <property type="match status" value="1"/>
</dbReference>
<dbReference type="Gene3D" id="3.40.50.1820">
    <property type="entry name" value="alpha/beta hydrolase"/>
    <property type="match status" value="1"/>
</dbReference>
<dbReference type="InterPro" id="IPR029058">
    <property type="entry name" value="AB_hydrolase_fold"/>
</dbReference>
<dbReference type="InterPro" id="IPR002018">
    <property type="entry name" value="CarbesteraseB"/>
</dbReference>
<dbReference type="InterPro" id="IPR019826">
    <property type="entry name" value="Carboxylesterase_B_AS"/>
</dbReference>
<dbReference type="InterPro" id="IPR019819">
    <property type="entry name" value="Carboxylesterase_B_CS"/>
</dbReference>
<dbReference type="PANTHER" id="PTHR43142">
    <property type="entry name" value="CARBOXYLIC ESTER HYDROLASE"/>
    <property type="match status" value="1"/>
</dbReference>
<dbReference type="PANTHER" id="PTHR43142:SF1">
    <property type="entry name" value="CARBOXYLIC ESTER HYDROLASE"/>
    <property type="match status" value="1"/>
</dbReference>
<dbReference type="Pfam" id="PF00135">
    <property type="entry name" value="COesterase"/>
    <property type="match status" value="1"/>
</dbReference>
<dbReference type="SUPFAM" id="SSF53474">
    <property type="entry name" value="alpha/beta-Hydrolases"/>
    <property type="match status" value="1"/>
</dbReference>
<dbReference type="PROSITE" id="PS00122">
    <property type="entry name" value="CARBOXYLESTERASE_B_1"/>
    <property type="match status" value="1"/>
</dbReference>
<dbReference type="PROSITE" id="PS00941">
    <property type="entry name" value="CARBOXYLESTERASE_B_2"/>
    <property type="match status" value="1"/>
</dbReference>
<keyword id="KW-1015">Disulfide bond</keyword>
<keyword id="KW-0325">Glycoprotein</keyword>
<keyword id="KW-0378">Hydrolase</keyword>
<keyword id="KW-1185">Reference proteome</keyword>
<keyword id="KW-0964">Secreted</keyword>
<keyword id="KW-0719">Serine esterase</keyword>
<keyword id="KW-0732">Signal</keyword>
<comment type="catalytic activity">
    <reaction evidence="3">
        <text>a carboxylic ester + H2O = an alcohol + a carboxylate + H(+)</text>
        <dbReference type="Rhea" id="RHEA:21164"/>
        <dbReference type="ChEBI" id="CHEBI:15377"/>
        <dbReference type="ChEBI" id="CHEBI:15378"/>
        <dbReference type="ChEBI" id="CHEBI:29067"/>
        <dbReference type="ChEBI" id="CHEBI:30879"/>
        <dbReference type="ChEBI" id="CHEBI:33308"/>
        <dbReference type="EC" id="3.1.1.1"/>
    </reaction>
</comment>
<comment type="subcellular location">
    <subcellularLocation>
        <location>Secreted</location>
    </subcellularLocation>
</comment>
<comment type="similarity">
    <text evidence="4">Belongs to the type-B carboxylesterase/lipase family.</text>
</comment>
<proteinExistence type="inferred from homology"/>
<protein>
    <recommendedName>
        <fullName>Esterase-5C</fullName>
        <shortName>Est-5C</shortName>
        <ecNumber>3.1.1.1</ecNumber>
    </recommendedName>
    <alternativeName>
        <fullName>Carboxylic-ester hydrolase 5C</fullName>
        <shortName>Carboxylesterase-5C</shortName>
    </alternativeName>
</protein>
<gene>
    <name type="primary">Est-5C</name>
    <name type="synonym">Est5C</name>
    <name type="ORF">GA19955</name>
</gene>